<comment type="function">
    <text evidence="1">NDH-1 shuttles electrons from NADH, via FMN and iron-sulfur (Fe-S) centers, to quinones in the respiratory chain. The immediate electron acceptor for the enzyme in this species is believed to be ubiquinone. Couples the redox reaction to proton translocation (for every two electrons transferred, four hydrogen ions are translocated across the cytoplasmic membrane), and thus conserves the redox energy in a proton gradient.</text>
</comment>
<comment type="catalytic activity">
    <reaction evidence="1">
        <text>a quinone + NADH + 5 H(+)(in) = a quinol + NAD(+) + 4 H(+)(out)</text>
        <dbReference type="Rhea" id="RHEA:57888"/>
        <dbReference type="ChEBI" id="CHEBI:15378"/>
        <dbReference type="ChEBI" id="CHEBI:24646"/>
        <dbReference type="ChEBI" id="CHEBI:57540"/>
        <dbReference type="ChEBI" id="CHEBI:57945"/>
        <dbReference type="ChEBI" id="CHEBI:132124"/>
    </reaction>
</comment>
<comment type="subunit">
    <text evidence="1">NDH-1 is composed of 14 different subunits. Subunits NuoA, H, J, K, L, M, N constitute the membrane sector of the complex.</text>
</comment>
<comment type="subcellular location">
    <subcellularLocation>
        <location evidence="1">Cell inner membrane</location>
        <topology evidence="1">Multi-pass membrane protein</topology>
    </subcellularLocation>
</comment>
<comment type="similarity">
    <text evidence="1">Belongs to the complex I subunit 4L family.</text>
</comment>
<proteinExistence type="inferred from homology"/>
<feature type="chain" id="PRO_0000390119" description="NADH-quinone oxidoreductase subunit K">
    <location>
        <begin position="1"/>
        <end position="101"/>
    </location>
</feature>
<feature type="transmembrane region" description="Helical" evidence="1">
    <location>
        <begin position="4"/>
        <end position="24"/>
    </location>
</feature>
<feature type="transmembrane region" description="Helical" evidence="1">
    <location>
        <begin position="30"/>
        <end position="50"/>
    </location>
</feature>
<feature type="transmembrane region" description="Helical" evidence="1">
    <location>
        <begin position="65"/>
        <end position="85"/>
    </location>
</feature>
<accession>B0ULL4</accession>
<reference key="1">
    <citation type="submission" date="2008-02" db="EMBL/GenBank/DDBJ databases">
        <title>Complete sequence of chromosome of Methylobacterium sp. 4-46.</title>
        <authorList>
            <consortium name="US DOE Joint Genome Institute"/>
            <person name="Copeland A."/>
            <person name="Lucas S."/>
            <person name="Lapidus A."/>
            <person name="Glavina del Rio T."/>
            <person name="Dalin E."/>
            <person name="Tice H."/>
            <person name="Bruce D."/>
            <person name="Goodwin L."/>
            <person name="Pitluck S."/>
            <person name="Chertkov O."/>
            <person name="Brettin T."/>
            <person name="Detter J.C."/>
            <person name="Han C."/>
            <person name="Kuske C.R."/>
            <person name="Schmutz J."/>
            <person name="Larimer F."/>
            <person name="Land M."/>
            <person name="Hauser L."/>
            <person name="Kyrpides N."/>
            <person name="Ivanova N."/>
            <person name="Marx C.J."/>
            <person name="Richardson P."/>
        </authorList>
    </citation>
    <scope>NUCLEOTIDE SEQUENCE [LARGE SCALE GENOMIC DNA]</scope>
    <source>
        <strain>4-46</strain>
    </source>
</reference>
<dbReference type="EC" id="7.1.1.-" evidence="1"/>
<dbReference type="EMBL" id="CP000943">
    <property type="protein sequence ID" value="ACA18742.1"/>
    <property type="molecule type" value="Genomic_DNA"/>
</dbReference>
<dbReference type="RefSeq" id="WP_012334131.1">
    <property type="nucleotide sequence ID" value="NC_010511.1"/>
</dbReference>
<dbReference type="SMR" id="B0ULL4"/>
<dbReference type="STRING" id="426117.M446_4400"/>
<dbReference type="KEGG" id="met:M446_4400"/>
<dbReference type="eggNOG" id="COG0713">
    <property type="taxonomic scope" value="Bacteria"/>
</dbReference>
<dbReference type="HOGENOM" id="CLU_144724_2_0_5"/>
<dbReference type="GO" id="GO:0030964">
    <property type="term" value="C:NADH dehydrogenase complex"/>
    <property type="evidence" value="ECO:0007669"/>
    <property type="project" value="TreeGrafter"/>
</dbReference>
<dbReference type="GO" id="GO:0005886">
    <property type="term" value="C:plasma membrane"/>
    <property type="evidence" value="ECO:0007669"/>
    <property type="project" value="UniProtKB-SubCell"/>
</dbReference>
<dbReference type="GO" id="GO:0050136">
    <property type="term" value="F:NADH:ubiquinone reductase (non-electrogenic) activity"/>
    <property type="evidence" value="ECO:0007669"/>
    <property type="project" value="UniProtKB-UniRule"/>
</dbReference>
<dbReference type="GO" id="GO:0048038">
    <property type="term" value="F:quinone binding"/>
    <property type="evidence" value="ECO:0007669"/>
    <property type="project" value="UniProtKB-KW"/>
</dbReference>
<dbReference type="GO" id="GO:0042773">
    <property type="term" value="P:ATP synthesis coupled electron transport"/>
    <property type="evidence" value="ECO:0007669"/>
    <property type="project" value="InterPro"/>
</dbReference>
<dbReference type="FunFam" id="1.10.287.3510:FF:000001">
    <property type="entry name" value="NADH-quinone oxidoreductase subunit K"/>
    <property type="match status" value="1"/>
</dbReference>
<dbReference type="Gene3D" id="1.10.287.3510">
    <property type="match status" value="1"/>
</dbReference>
<dbReference type="HAMAP" id="MF_01456">
    <property type="entry name" value="NDH1_NuoK"/>
    <property type="match status" value="1"/>
</dbReference>
<dbReference type="InterPro" id="IPR001133">
    <property type="entry name" value="NADH_UbQ_OxRdtase_chain4L/K"/>
</dbReference>
<dbReference type="InterPro" id="IPR039428">
    <property type="entry name" value="NUOK/Mnh_C1-like"/>
</dbReference>
<dbReference type="NCBIfam" id="NF004320">
    <property type="entry name" value="PRK05715.1-2"/>
    <property type="match status" value="1"/>
</dbReference>
<dbReference type="NCBIfam" id="NF004321">
    <property type="entry name" value="PRK05715.1-3"/>
    <property type="match status" value="1"/>
</dbReference>
<dbReference type="NCBIfam" id="NF004323">
    <property type="entry name" value="PRK05715.1-5"/>
    <property type="match status" value="1"/>
</dbReference>
<dbReference type="PANTHER" id="PTHR11434:SF21">
    <property type="entry name" value="NADH DEHYDROGENASE SUBUNIT 4L-RELATED"/>
    <property type="match status" value="1"/>
</dbReference>
<dbReference type="PANTHER" id="PTHR11434">
    <property type="entry name" value="NADH-UBIQUINONE OXIDOREDUCTASE SUBUNIT ND4L"/>
    <property type="match status" value="1"/>
</dbReference>
<dbReference type="Pfam" id="PF00420">
    <property type="entry name" value="Oxidored_q2"/>
    <property type="match status" value="1"/>
</dbReference>
<gene>
    <name evidence="1" type="primary">nuoK</name>
    <name type="ordered locus">M446_4400</name>
</gene>
<evidence type="ECO:0000255" key="1">
    <source>
        <dbReference type="HAMAP-Rule" id="MF_01456"/>
    </source>
</evidence>
<sequence length="101" mass="10786">MIGLSHYLTVAAILFTLGVLGIFINRKNVIVILMCVELILLAVNINLVAFSTHLGDIVGQVFALFVLTVAAAEAAIGLAILVVFFRNRGSIAVEDVNMMKG</sequence>
<keyword id="KW-0997">Cell inner membrane</keyword>
<keyword id="KW-1003">Cell membrane</keyword>
<keyword id="KW-0472">Membrane</keyword>
<keyword id="KW-0520">NAD</keyword>
<keyword id="KW-0874">Quinone</keyword>
<keyword id="KW-1278">Translocase</keyword>
<keyword id="KW-0812">Transmembrane</keyword>
<keyword id="KW-1133">Transmembrane helix</keyword>
<keyword id="KW-0813">Transport</keyword>
<keyword id="KW-0830">Ubiquinone</keyword>
<protein>
    <recommendedName>
        <fullName evidence="1">NADH-quinone oxidoreductase subunit K</fullName>
        <ecNumber evidence="1">7.1.1.-</ecNumber>
    </recommendedName>
    <alternativeName>
        <fullName evidence="1">NADH dehydrogenase I subunit K</fullName>
    </alternativeName>
    <alternativeName>
        <fullName evidence="1">NDH-1 subunit K</fullName>
    </alternativeName>
</protein>
<name>NUOK_METS4</name>
<organism>
    <name type="scientific">Methylobacterium sp. (strain 4-46)</name>
    <dbReference type="NCBI Taxonomy" id="426117"/>
    <lineage>
        <taxon>Bacteria</taxon>
        <taxon>Pseudomonadati</taxon>
        <taxon>Pseudomonadota</taxon>
        <taxon>Alphaproteobacteria</taxon>
        <taxon>Hyphomicrobiales</taxon>
        <taxon>Methylobacteriaceae</taxon>
        <taxon>Methylobacterium</taxon>
    </lineage>
</organism>